<sequence>MTAELQQDDSAGAADGHGSSCQMLLNQLREITGIQDPSFLHEALKASNGDITQAVSLLTDQRVKEPSHDTTAAEPSEVEESATSKDLLAKVIDLTHDNKDDLQAAIALSLLESPNIQADNRDLNRAHEANSAETKRSKRKRCEVWGENHNPNNWRRVDGWPVGLKNVGNTCWFSAVIQSLFQLPEFRRLVLSYNLPQNILENCRSHTEKRNIMFMQELQYLFALLLGSNRKFVDPSAALDLLKGAFRSSEEQQQDVSEFTHKLLDWLEDAFQLAVNVNSHLRNKSENPMVQLFYGTFLTEGVREGKPFCNNETFGQYPLQVNGYHNLDECLEGAMVEGDIALLPSDRSVKYGQERWFTKLPPVLTFELSRFEFNQSLGQPEKIHNKLEFPQIIYMDRYMYKSKELIRSKRESVRKLKEEIQVLQQKLERYVKYGSGPSRFPLPDMLKYVIEFASTKPASESCLSGSAEHVTLPLPSVHCPISDLTPKESSSPESCSQNAGSTFSSPEDALPSSEGMNGPFTSPHSSLETPAPPAPRTVTDEEMNFVKTCLQRWRSEIEQDIQDLKNCISSSTKAIEQMYCDPLLRQVPYRLHAVLVHEGQASAGHYWAYIYNQPRQTWLKYNDISVTESSWEELERDSYGGLRNVSAYCLMYINDNLPHFSAEASSNESDETAGEVEALSVELRQYIQEDNWRFQQEVEEWEEEQSCKIPQMESSPNSSSQDFSTSQESPAVSSHEVRCLSSEHAVIAKEQTAQAIANTAHAYEKSGVEAALSEAFHEEYSRLYQLAKETPTSHSDPRLQHVLVYFFQNEAPKRVVERTLLEQFADRNLSYDERSISIMKVAQAKLMEIGPDDMNMEEYKRWHEDYSLFRKVSVYLLTGLELFQKGKYQEALSYLVYAYQSNAGLLVKGPRRGVKESVIALYRRKCLLELNAKAASLFETNDDHSVTEGINVMNELIIPCIHLIINNDISKDDLDAIEVMRNHWCSYLGKDIAENLQLCLGEFLPRLLDPSAEIIVLKEPPTIRPNSPYDLCNRFAAVMESIQGVSTVTVK</sequence>
<name>UBP28_MOUSE</name>
<evidence type="ECO:0000250" key="1"/>
<evidence type="ECO:0000250" key="2">
    <source>
        <dbReference type="UniProtKB" id="Q96RU2"/>
    </source>
</evidence>
<evidence type="ECO:0000255" key="3">
    <source>
        <dbReference type="PROSITE-ProRule" id="PRU10092"/>
    </source>
</evidence>
<evidence type="ECO:0000255" key="4">
    <source>
        <dbReference type="PROSITE-ProRule" id="PRU10093"/>
    </source>
</evidence>
<evidence type="ECO:0000256" key="5">
    <source>
        <dbReference type="SAM" id="MobiDB-lite"/>
    </source>
</evidence>
<evidence type="ECO:0000303" key="6">
    <source>
    </source>
</evidence>
<evidence type="ECO:0000305" key="7"/>
<evidence type="ECO:0007744" key="8">
    <source>
    </source>
</evidence>
<feature type="chain" id="PRO_0000080658" description="Ubiquitin carboxyl-terminal hydrolase 28">
    <location>
        <begin position="1"/>
        <end position="1051"/>
    </location>
</feature>
<feature type="domain" description="UIM" evidence="7">
    <location>
        <begin position="97"/>
        <end position="116"/>
    </location>
</feature>
<feature type="domain" description="USP">
    <location>
        <begin position="162"/>
        <end position="655"/>
    </location>
</feature>
<feature type="region of interest" description="Disordered" evidence="5">
    <location>
        <begin position="60"/>
        <end position="82"/>
    </location>
</feature>
<feature type="region of interest" description="Disordered" evidence="5">
    <location>
        <begin position="121"/>
        <end position="140"/>
    </location>
</feature>
<feature type="region of interest" description="Disordered" evidence="5">
    <location>
        <begin position="483"/>
        <end position="538"/>
    </location>
</feature>
<feature type="region of interest" description="Disordered" evidence="5">
    <location>
        <begin position="703"/>
        <end position="735"/>
    </location>
</feature>
<feature type="compositionally biased region" description="Basic and acidic residues" evidence="5">
    <location>
        <begin position="121"/>
        <end position="135"/>
    </location>
</feature>
<feature type="compositionally biased region" description="Polar residues" evidence="5">
    <location>
        <begin position="487"/>
        <end position="505"/>
    </location>
</feature>
<feature type="compositionally biased region" description="Polar residues" evidence="5">
    <location>
        <begin position="519"/>
        <end position="528"/>
    </location>
</feature>
<feature type="compositionally biased region" description="Low complexity" evidence="5">
    <location>
        <begin position="713"/>
        <end position="730"/>
    </location>
</feature>
<feature type="active site" description="Nucleophile" evidence="3 4">
    <location>
        <position position="171"/>
    </location>
</feature>
<feature type="active site" description="Proton acceptor" evidence="3 4">
    <location>
        <position position="605"/>
    </location>
</feature>
<feature type="modified residue" description="Phosphoserine" evidence="2">
    <location>
        <position position="67"/>
    </location>
</feature>
<feature type="modified residue" description="Phosphoserine" evidence="2">
    <location>
        <position position="376"/>
    </location>
</feature>
<feature type="modified residue" description="Phosphoserine" evidence="8">
    <location>
        <position position="555"/>
    </location>
</feature>
<feature type="modified residue" description="Phosphoserine" evidence="2">
    <location>
        <position position="720"/>
    </location>
</feature>
<feature type="modified residue" description="Phosphothreonine" evidence="2">
    <location>
        <position position="1022"/>
    </location>
</feature>
<feature type="cross-link" description="Glycyl lysine isopeptide (Lys-Gly) (interchain with G-Cter in SUMO2)" evidence="2">
    <location>
        <position position="99"/>
    </location>
</feature>
<feature type="splice variant" id="VSP_015581" description="In isoform 2." evidence="6">
    <location>
        <begin position="429"/>
        <end position="453"/>
    </location>
</feature>
<feature type="sequence conflict" description="In Ref. 3; BAC98190." evidence="7" ref="3">
    <original>P</original>
    <variation>L</variation>
    <location>
        <position position="523"/>
    </location>
</feature>
<feature type="sequence conflict" description="In Ref. 3; BAC98190." evidence="7" ref="3">
    <original>T</original>
    <variation>I</variation>
    <location>
        <position position="617"/>
    </location>
</feature>
<organism>
    <name type="scientific">Mus musculus</name>
    <name type="common">Mouse</name>
    <dbReference type="NCBI Taxonomy" id="10090"/>
    <lineage>
        <taxon>Eukaryota</taxon>
        <taxon>Metazoa</taxon>
        <taxon>Chordata</taxon>
        <taxon>Craniata</taxon>
        <taxon>Vertebrata</taxon>
        <taxon>Euteleostomi</taxon>
        <taxon>Mammalia</taxon>
        <taxon>Eutheria</taxon>
        <taxon>Euarchontoglires</taxon>
        <taxon>Glires</taxon>
        <taxon>Rodentia</taxon>
        <taxon>Myomorpha</taxon>
        <taxon>Muroidea</taxon>
        <taxon>Muridae</taxon>
        <taxon>Murinae</taxon>
        <taxon>Mus</taxon>
        <taxon>Mus</taxon>
    </lineage>
</organism>
<reference key="1">
    <citation type="journal article" date="2004" name="Genome Res.">
        <title>The status, quality, and expansion of the NIH full-length cDNA project: the Mammalian Gene Collection (MGC).</title>
        <authorList>
            <consortium name="The MGC Project Team"/>
        </authorList>
    </citation>
    <scope>NUCLEOTIDE SEQUENCE [LARGE SCALE MRNA] (ISOFORMS 1 AND 2)</scope>
    <source>
        <strain>C57BL/6J</strain>
        <tissue>Brain</tissue>
        <tissue>Embryonic germ cell</tissue>
    </source>
</reference>
<reference key="2">
    <citation type="journal article" date="2005" name="Science">
        <title>The transcriptional landscape of the mammalian genome.</title>
        <authorList>
            <person name="Carninci P."/>
            <person name="Kasukawa T."/>
            <person name="Katayama S."/>
            <person name="Gough J."/>
            <person name="Frith M.C."/>
            <person name="Maeda N."/>
            <person name="Oyama R."/>
            <person name="Ravasi T."/>
            <person name="Lenhard B."/>
            <person name="Wells C."/>
            <person name="Kodzius R."/>
            <person name="Shimokawa K."/>
            <person name="Bajic V.B."/>
            <person name="Brenner S.E."/>
            <person name="Batalov S."/>
            <person name="Forrest A.R."/>
            <person name="Zavolan M."/>
            <person name="Davis M.J."/>
            <person name="Wilming L.G."/>
            <person name="Aidinis V."/>
            <person name="Allen J.E."/>
            <person name="Ambesi-Impiombato A."/>
            <person name="Apweiler R."/>
            <person name="Aturaliya R.N."/>
            <person name="Bailey T.L."/>
            <person name="Bansal M."/>
            <person name="Baxter L."/>
            <person name="Beisel K.W."/>
            <person name="Bersano T."/>
            <person name="Bono H."/>
            <person name="Chalk A.M."/>
            <person name="Chiu K.P."/>
            <person name="Choudhary V."/>
            <person name="Christoffels A."/>
            <person name="Clutterbuck D.R."/>
            <person name="Crowe M.L."/>
            <person name="Dalla E."/>
            <person name="Dalrymple B.P."/>
            <person name="de Bono B."/>
            <person name="Della Gatta G."/>
            <person name="di Bernardo D."/>
            <person name="Down T."/>
            <person name="Engstrom P."/>
            <person name="Fagiolini M."/>
            <person name="Faulkner G."/>
            <person name="Fletcher C.F."/>
            <person name="Fukushima T."/>
            <person name="Furuno M."/>
            <person name="Futaki S."/>
            <person name="Gariboldi M."/>
            <person name="Georgii-Hemming P."/>
            <person name="Gingeras T.R."/>
            <person name="Gojobori T."/>
            <person name="Green R.E."/>
            <person name="Gustincich S."/>
            <person name="Harbers M."/>
            <person name="Hayashi Y."/>
            <person name="Hensch T.K."/>
            <person name="Hirokawa N."/>
            <person name="Hill D."/>
            <person name="Huminiecki L."/>
            <person name="Iacono M."/>
            <person name="Ikeo K."/>
            <person name="Iwama A."/>
            <person name="Ishikawa T."/>
            <person name="Jakt M."/>
            <person name="Kanapin A."/>
            <person name="Katoh M."/>
            <person name="Kawasawa Y."/>
            <person name="Kelso J."/>
            <person name="Kitamura H."/>
            <person name="Kitano H."/>
            <person name="Kollias G."/>
            <person name="Krishnan S.P."/>
            <person name="Kruger A."/>
            <person name="Kummerfeld S.K."/>
            <person name="Kurochkin I.V."/>
            <person name="Lareau L.F."/>
            <person name="Lazarevic D."/>
            <person name="Lipovich L."/>
            <person name="Liu J."/>
            <person name="Liuni S."/>
            <person name="McWilliam S."/>
            <person name="Madan Babu M."/>
            <person name="Madera M."/>
            <person name="Marchionni L."/>
            <person name="Matsuda H."/>
            <person name="Matsuzawa S."/>
            <person name="Miki H."/>
            <person name="Mignone F."/>
            <person name="Miyake S."/>
            <person name="Morris K."/>
            <person name="Mottagui-Tabar S."/>
            <person name="Mulder N."/>
            <person name="Nakano N."/>
            <person name="Nakauchi H."/>
            <person name="Ng P."/>
            <person name="Nilsson R."/>
            <person name="Nishiguchi S."/>
            <person name="Nishikawa S."/>
            <person name="Nori F."/>
            <person name="Ohara O."/>
            <person name="Okazaki Y."/>
            <person name="Orlando V."/>
            <person name="Pang K.C."/>
            <person name="Pavan W.J."/>
            <person name="Pavesi G."/>
            <person name="Pesole G."/>
            <person name="Petrovsky N."/>
            <person name="Piazza S."/>
            <person name="Reed J."/>
            <person name="Reid J.F."/>
            <person name="Ring B.Z."/>
            <person name="Ringwald M."/>
            <person name="Rost B."/>
            <person name="Ruan Y."/>
            <person name="Salzberg S.L."/>
            <person name="Sandelin A."/>
            <person name="Schneider C."/>
            <person name="Schoenbach C."/>
            <person name="Sekiguchi K."/>
            <person name="Semple C.A."/>
            <person name="Seno S."/>
            <person name="Sessa L."/>
            <person name="Sheng Y."/>
            <person name="Shibata Y."/>
            <person name="Shimada H."/>
            <person name="Shimada K."/>
            <person name="Silva D."/>
            <person name="Sinclair B."/>
            <person name="Sperling S."/>
            <person name="Stupka E."/>
            <person name="Sugiura K."/>
            <person name="Sultana R."/>
            <person name="Takenaka Y."/>
            <person name="Taki K."/>
            <person name="Tammoja K."/>
            <person name="Tan S.L."/>
            <person name="Tang S."/>
            <person name="Taylor M.S."/>
            <person name="Tegner J."/>
            <person name="Teichmann S.A."/>
            <person name="Ueda H.R."/>
            <person name="van Nimwegen E."/>
            <person name="Verardo R."/>
            <person name="Wei C.L."/>
            <person name="Yagi K."/>
            <person name="Yamanishi H."/>
            <person name="Zabarovsky E."/>
            <person name="Zhu S."/>
            <person name="Zimmer A."/>
            <person name="Hide W."/>
            <person name="Bult C."/>
            <person name="Grimmond S.M."/>
            <person name="Teasdale R.D."/>
            <person name="Liu E.T."/>
            <person name="Brusic V."/>
            <person name="Quackenbush J."/>
            <person name="Wahlestedt C."/>
            <person name="Mattick J.S."/>
            <person name="Hume D.A."/>
            <person name="Kai C."/>
            <person name="Sasaki D."/>
            <person name="Tomaru Y."/>
            <person name="Fukuda S."/>
            <person name="Kanamori-Katayama M."/>
            <person name="Suzuki M."/>
            <person name="Aoki J."/>
            <person name="Arakawa T."/>
            <person name="Iida J."/>
            <person name="Imamura K."/>
            <person name="Itoh M."/>
            <person name="Kato T."/>
            <person name="Kawaji H."/>
            <person name="Kawagashira N."/>
            <person name="Kawashima T."/>
            <person name="Kojima M."/>
            <person name="Kondo S."/>
            <person name="Konno H."/>
            <person name="Nakano K."/>
            <person name="Ninomiya N."/>
            <person name="Nishio T."/>
            <person name="Okada M."/>
            <person name="Plessy C."/>
            <person name="Shibata K."/>
            <person name="Shiraki T."/>
            <person name="Suzuki S."/>
            <person name="Tagami M."/>
            <person name="Waki K."/>
            <person name="Watahiki A."/>
            <person name="Okamura-Oho Y."/>
            <person name="Suzuki H."/>
            <person name="Kawai J."/>
            <person name="Hayashizaki Y."/>
        </authorList>
    </citation>
    <scope>NUCLEOTIDE SEQUENCE [LARGE SCALE MRNA] OF 292-1051</scope>
    <source>
        <strain>C57BL/6J</strain>
        <tissue>Lung</tissue>
    </source>
</reference>
<reference key="3">
    <citation type="journal article" date="2003" name="DNA Res.">
        <title>Prediction of the coding sequences of mouse homologues of KIAA gene: III. The complete nucleotide sequences of 500 mouse KIAA-homologous cDNAs identified by screening of terminal sequences of cDNA clones randomly sampled from size-fractionated libraries.</title>
        <authorList>
            <person name="Okazaki N."/>
            <person name="Kikuno R."/>
            <person name="Ohara R."/>
            <person name="Inamoto S."/>
            <person name="Koseki H."/>
            <person name="Hiraoka S."/>
            <person name="Saga Y."/>
            <person name="Nagase T."/>
            <person name="Ohara O."/>
            <person name="Koga H."/>
        </authorList>
    </citation>
    <scope>NUCLEOTIDE SEQUENCE [LARGE SCALE MRNA] OF 392-1051</scope>
    <source>
        <tissue>Embryonic tail</tissue>
    </source>
</reference>
<reference key="4">
    <citation type="journal article" date="2010" name="Cell">
        <title>A tissue-specific atlas of mouse protein phosphorylation and expression.</title>
        <authorList>
            <person name="Huttlin E.L."/>
            <person name="Jedrychowski M.P."/>
            <person name="Elias J.E."/>
            <person name="Goswami T."/>
            <person name="Rad R."/>
            <person name="Beausoleil S.A."/>
            <person name="Villen J."/>
            <person name="Haas W."/>
            <person name="Sowa M.E."/>
            <person name="Gygi S.P."/>
        </authorList>
    </citation>
    <scope>PHOSPHORYLATION [LARGE SCALE ANALYSIS] AT SER-555</scope>
    <scope>IDENTIFICATION BY MASS SPECTROMETRY [LARGE SCALE ANALYSIS]</scope>
    <source>
        <tissue>Heart</tissue>
        <tissue>Testis</tissue>
    </source>
</reference>
<gene>
    <name type="primary">Usp28</name>
    <name type="synonym">Kiaa1515</name>
</gene>
<comment type="function">
    <text evidence="2">Deubiquitinase involved in DNA damage response checkpoint and MYC proto-oncogene stability. Involved in DNA damage induced apoptosis by specifically deubiquitinating proteins of the DNA damage pathway such as CLSPN. Also involved in G2 DNA damage checkpoint, by deubiquitinating CLSPN, and preventing its degradation by the anaphase promoting complex/cyclosome (APC/C). In contrast, it does not deubiquitinate PLK1. Specifically deubiquitinates MYC in the nucleoplasm, leading to prevent MYC degradation by the proteasome: acts by specifically interacting with FBXW7 (FBW7alpha) in the nucleoplasm and counteracting ubiquitination of MYC by the SCF(FBXW7) complex. Deubiquitinates ZNF304, hence preventing ZNF304 degradation by the proteasome and leading to the activated KRAS-mediated promoter hypermethylation and transcriptional silencing of tumor suppressor genes (TSGs) in a subset of colorectal cancers (CRC) cells.</text>
</comment>
<comment type="catalytic activity">
    <reaction>
        <text>Thiol-dependent hydrolysis of ester, thioester, amide, peptide and isopeptide bonds formed by the C-terminal Gly of ubiquitin (a 76-residue protein attached to proteins as an intracellular targeting signal).</text>
        <dbReference type="EC" id="3.4.19.12"/>
    </reaction>
</comment>
<comment type="subunit">
    <text evidence="2">Interacts with ZNF304. Interacts with PRKD1. Interacts with TP53BP1. Interacts with FBXW7; following DNA damage, dissociates from FBXW7 leading to degradation of MYC.</text>
</comment>
<comment type="subcellular location">
    <subcellularLocation>
        <location evidence="1">Nucleus</location>
        <location evidence="1">Nucleoplasm</location>
    </subcellularLocation>
</comment>
<comment type="alternative products">
    <event type="alternative splicing"/>
    <isoform>
        <id>Q5I043-1</id>
        <name>1</name>
        <sequence type="displayed"/>
    </isoform>
    <isoform>
        <id>Q5I043-2</id>
        <name>2</name>
        <sequence type="described" ref="VSP_015581"/>
    </isoform>
</comment>
<comment type="PTM">
    <text evidence="1">Degraded upon nickel ion level or hypoxia exposure.</text>
</comment>
<comment type="PTM">
    <text evidence="2">Phosphorylated upon DNA damage at Ser-67 and Ser-720, by ATM or ATR. Phosphorylated by PRKD1.</text>
</comment>
<comment type="similarity">
    <text evidence="7">Belongs to the peptidase C19 family. USP28 subfamily.</text>
</comment>
<keyword id="KW-0025">Alternative splicing</keyword>
<keyword id="KW-0227">DNA damage</keyword>
<keyword id="KW-0234">DNA repair</keyword>
<keyword id="KW-0378">Hydrolase</keyword>
<keyword id="KW-1017">Isopeptide bond</keyword>
<keyword id="KW-0539">Nucleus</keyword>
<keyword id="KW-0597">Phosphoprotein</keyword>
<keyword id="KW-0645">Protease</keyword>
<keyword id="KW-1185">Reference proteome</keyword>
<keyword id="KW-0788">Thiol protease</keyword>
<keyword id="KW-0832">Ubl conjugation</keyword>
<keyword id="KW-0833">Ubl conjugation pathway</keyword>
<dbReference type="EC" id="3.4.19.12"/>
<dbReference type="EMBL" id="BC066033">
    <property type="protein sequence ID" value="AAH66033.1"/>
    <property type="molecule type" value="mRNA"/>
</dbReference>
<dbReference type="EMBL" id="BC088733">
    <property type="protein sequence ID" value="AAH88733.1"/>
    <property type="molecule type" value="mRNA"/>
</dbReference>
<dbReference type="EMBL" id="AK052442">
    <property type="protein sequence ID" value="BAC34993.1"/>
    <property type="molecule type" value="mRNA"/>
</dbReference>
<dbReference type="EMBL" id="AK129380">
    <property type="protein sequence ID" value="BAC98190.1"/>
    <property type="molecule type" value="mRNA"/>
</dbReference>
<dbReference type="CCDS" id="CCDS40613.1">
    <molecule id="Q5I043-1"/>
</dbReference>
<dbReference type="RefSeq" id="NP_780691.2">
    <molecule id="Q5I043-1"/>
    <property type="nucleotide sequence ID" value="NM_175482.3"/>
</dbReference>
<dbReference type="SMR" id="Q5I043"/>
<dbReference type="BioGRID" id="231641">
    <property type="interactions" value="1"/>
</dbReference>
<dbReference type="FunCoup" id="Q5I043">
    <property type="interactions" value="1563"/>
</dbReference>
<dbReference type="IntAct" id="Q5I043">
    <property type="interactions" value="3"/>
</dbReference>
<dbReference type="MINT" id="Q5I043"/>
<dbReference type="STRING" id="10090.ENSMUSP00000047467"/>
<dbReference type="MEROPS" id="C19.054"/>
<dbReference type="iPTMnet" id="Q5I043"/>
<dbReference type="PhosphoSitePlus" id="Q5I043"/>
<dbReference type="SwissPalm" id="Q5I043"/>
<dbReference type="PaxDb" id="10090-ENSMUSP00000047467"/>
<dbReference type="PeptideAtlas" id="Q5I043"/>
<dbReference type="ProteomicsDB" id="298099">
    <molecule id="Q5I043-1"/>
</dbReference>
<dbReference type="ProteomicsDB" id="298100">
    <molecule id="Q5I043-2"/>
</dbReference>
<dbReference type="Pumba" id="Q5I043"/>
<dbReference type="Antibodypedia" id="1708">
    <property type="antibodies" value="302 antibodies from 37 providers"/>
</dbReference>
<dbReference type="DNASU" id="235323"/>
<dbReference type="Ensembl" id="ENSMUST00000047349.8">
    <molecule id="Q5I043-1"/>
    <property type="protein sequence ID" value="ENSMUSP00000047467.6"/>
    <property type="gene ID" value="ENSMUSG00000032267.9"/>
</dbReference>
<dbReference type="Ensembl" id="ENSMUST00000213874.2">
    <molecule id="Q5I043-2"/>
    <property type="protein sequence ID" value="ENSMUSP00000149207.2"/>
    <property type="gene ID" value="ENSMUSG00000032267.9"/>
</dbReference>
<dbReference type="GeneID" id="235323"/>
<dbReference type="KEGG" id="mmu:235323"/>
<dbReference type="UCSC" id="uc009pir.1">
    <molecule id="Q5I043-1"/>
    <property type="organism name" value="mouse"/>
</dbReference>
<dbReference type="UCSC" id="uc009pis.1">
    <molecule id="Q5I043-2"/>
    <property type="organism name" value="mouse"/>
</dbReference>
<dbReference type="AGR" id="MGI:2442293"/>
<dbReference type="CTD" id="57646"/>
<dbReference type="MGI" id="MGI:2442293">
    <property type="gene designation" value="Usp28"/>
</dbReference>
<dbReference type="VEuPathDB" id="HostDB:ENSMUSG00000032267"/>
<dbReference type="eggNOG" id="KOG1863">
    <property type="taxonomic scope" value="Eukaryota"/>
</dbReference>
<dbReference type="GeneTree" id="ENSGT00940000157670"/>
<dbReference type="HOGENOM" id="CLU_012188_0_0_1"/>
<dbReference type="InParanoid" id="Q5I043"/>
<dbReference type="OMA" id="HANQRWL"/>
<dbReference type="OrthoDB" id="2420415at2759"/>
<dbReference type="PhylomeDB" id="Q5I043"/>
<dbReference type="TreeFam" id="TF329035"/>
<dbReference type="Reactome" id="R-MMU-5689880">
    <property type="pathway name" value="Ub-specific processing proteases"/>
</dbReference>
<dbReference type="BioGRID-ORCS" id="235323">
    <property type="hits" value="3 hits in 117 CRISPR screens"/>
</dbReference>
<dbReference type="ChiTaRS" id="Usp28">
    <property type="organism name" value="mouse"/>
</dbReference>
<dbReference type="PRO" id="PR:Q5I043"/>
<dbReference type="Proteomes" id="UP000000589">
    <property type="component" value="Chromosome 9"/>
</dbReference>
<dbReference type="RNAct" id="Q5I043">
    <property type="molecule type" value="protein"/>
</dbReference>
<dbReference type="Bgee" id="ENSMUSG00000032267">
    <property type="expression patterns" value="Expressed in interventricular septum and 226 other cell types or tissues"/>
</dbReference>
<dbReference type="ExpressionAtlas" id="Q5I043">
    <property type="expression patterns" value="baseline and differential"/>
</dbReference>
<dbReference type="GO" id="GO:0005654">
    <property type="term" value="C:nucleoplasm"/>
    <property type="evidence" value="ECO:0000250"/>
    <property type="project" value="UniProtKB"/>
</dbReference>
<dbReference type="GO" id="GO:0004843">
    <property type="term" value="F:cysteine-type deubiquitinase activity"/>
    <property type="evidence" value="ECO:0000250"/>
    <property type="project" value="UniProtKB"/>
</dbReference>
<dbReference type="GO" id="GO:0008283">
    <property type="term" value="P:cell population proliferation"/>
    <property type="evidence" value="ECO:0000250"/>
    <property type="project" value="UniProtKB"/>
</dbReference>
<dbReference type="GO" id="GO:0000077">
    <property type="term" value="P:DNA damage checkpoint signaling"/>
    <property type="evidence" value="ECO:0000250"/>
    <property type="project" value="UniProtKB"/>
</dbReference>
<dbReference type="GO" id="GO:0006281">
    <property type="term" value="P:DNA repair"/>
    <property type="evidence" value="ECO:0007669"/>
    <property type="project" value="UniProtKB-KW"/>
</dbReference>
<dbReference type="GO" id="GO:0042771">
    <property type="term" value="P:intrinsic apoptotic signaling pathway in response to DNA damage by p53 class mediator"/>
    <property type="evidence" value="ECO:0000250"/>
    <property type="project" value="UniProtKB"/>
</dbReference>
<dbReference type="GO" id="GO:0016579">
    <property type="term" value="P:protein deubiquitination"/>
    <property type="evidence" value="ECO:0000250"/>
    <property type="project" value="UniProtKB"/>
</dbReference>
<dbReference type="GO" id="GO:0006508">
    <property type="term" value="P:proteolysis"/>
    <property type="evidence" value="ECO:0007669"/>
    <property type="project" value="UniProtKB-KW"/>
</dbReference>
<dbReference type="GO" id="GO:0031647">
    <property type="term" value="P:regulation of protein stability"/>
    <property type="evidence" value="ECO:0000250"/>
    <property type="project" value="UniProtKB"/>
</dbReference>
<dbReference type="GO" id="GO:0010212">
    <property type="term" value="P:response to ionizing radiation"/>
    <property type="evidence" value="ECO:0000250"/>
    <property type="project" value="UniProtKB"/>
</dbReference>
<dbReference type="CDD" id="cd02665">
    <property type="entry name" value="Peptidase_C19I"/>
    <property type="match status" value="1"/>
</dbReference>
<dbReference type="CDD" id="cd14355">
    <property type="entry name" value="UBA_UBP28"/>
    <property type="match status" value="1"/>
</dbReference>
<dbReference type="CDD" id="cd20487">
    <property type="entry name" value="USP28_C"/>
    <property type="match status" value="1"/>
</dbReference>
<dbReference type="FunFam" id="3.90.70.10:FF:000004">
    <property type="entry name" value="Putative ubiquitin carboxyl-terminal hydrolase 25"/>
    <property type="match status" value="1"/>
</dbReference>
<dbReference type="FunFam" id="1.10.8.10:FF:000046">
    <property type="entry name" value="ubiquitin carboxyl-terminal hydrolase 28 isoform X2"/>
    <property type="match status" value="1"/>
</dbReference>
<dbReference type="Gene3D" id="6.10.250.1720">
    <property type="match status" value="1"/>
</dbReference>
<dbReference type="Gene3D" id="3.90.70.10">
    <property type="entry name" value="Cysteine proteinases"/>
    <property type="match status" value="1"/>
</dbReference>
<dbReference type="Gene3D" id="1.10.8.10">
    <property type="entry name" value="DNA helicase RuvA subunit, C-terminal domain"/>
    <property type="match status" value="1"/>
</dbReference>
<dbReference type="InterPro" id="IPR038765">
    <property type="entry name" value="Papain-like_cys_pep_sf"/>
</dbReference>
<dbReference type="InterPro" id="IPR050164">
    <property type="entry name" value="Peptidase_C19"/>
</dbReference>
<dbReference type="InterPro" id="IPR001394">
    <property type="entry name" value="Peptidase_C19_UCH"/>
</dbReference>
<dbReference type="InterPro" id="IPR009060">
    <property type="entry name" value="UBA-like_sf"/>
</dbReference>
<dbReference type="InterPro" id="IPR054109">
    <property type="entry name" value="UBA_8"/>
</dbReference>
<dbReference type="InterPro" id="IPR054108">
    <property type="entry name" value="USP25/28_UIM"/>
</dbReference>
<dbReference type="InterPro" id="IPR018200">
    <property type="entry name" value="USP_CS"/>
</dbReference>
<dbReference type="InterPro" id="IPR028889">
    <property type="entry name" value="USP_dom"/>
</dbReference>
<dbReference type="PANTHER" id="PTHR24006">
    <property type="entry name" value="UBIQUITIN CARBOXYL-TERMINAL HYDROLASE"/>
    <property type="match status" value="1"/>
</dbReference>
<dbReference type="PANTHER" id="PTHR24006:SF678">
    <property type="entry name" value="UBIQUITIN CARBOXYL-TERMINAL HYDROLASE 28"/>
    <property type="match status" value="1"/>
</dbReference>
<dbReference type="Pfam" id="PF22566">
    <property type="entry name" value="UBA_8"/>
    <property type="match status" value="1"/>
</dbReference>
<dbReference type="Pfam" id="PF00443">
    <property type="entry name" value="UCH"/>
    <property type="match status" value="1"/>
</dbReference>
<dbReference type="Pfam" id="PF21909">
    <property type="entry name" value="USP_UIM_N"/>
    <property type="match status" value="1"/>
</dbReference>
<dbReference type="SUPFAM" id="SSF54001">
    <property type="entry name" value="Cysteine proteinases"/>
    <property type="match status" value="1"/>
</dbReference>
<dbReference type="SUPFAM" id="SSF46934">
    <property type="entry name" value="UBA-like"/>
    <property type="match status" value="1"/>
</dbReference>
<dbReference type="PROSITE" id="PS00972">
    <property type="entry name" value="USP_1"/>
    <property type="match status" value="1"/>
</dbReference>
<dbReference type="PROSITE" id="PS00973">
    <property type="entry name" value="USP_2"/>
    <property type="match status" value="1"/>
</dbReference>
<dbReference type="PROSITE" id="PS50235">
    <property type="entry name" value="USP_3"/>
    <property type="match status" value="1"/>
</dbReference>
<proteinExistence type="evidence at protein level"/>
<accession>Q5I043</accession>
<accession>Q6NZP3</accession>
<accession>Q6ZPP1</accession>
<accession>Q8BWI1</accession>
<protein>
    <recommendedName>
        <fullName>Ubiquitin carboxyl-terminal hydrolase 28</fullName>
        <ecNumber>3.4.19.12</ecNumber>
    </recommendedName>
    <alternativeName>
        <fullName>Deubiquitinating enzyme 28</fullName>
    </alternativeName>
    <alternativeName>
        <fullName>Ubiquitin thioesterase 28</fullName>
    </alternativeName>
    <alternativeName>
        <fullName>Ubiquitin-specific-processing protease 28</fullName>
    </alternativeName>
</protein>